<organism>
    <name type="scientific">Vibrio cholerae serotype O1 (strain M66-2)</name>
    <dbReference type="NCBI Taxonomy" id="579112"/>
    <lineage>
        <taxon>Bacteria</taxon>
        <taxon>Pseudomonadati</taxon>
        <taxon>Pseudomonadota</taxon>
        <taxon>Gammaproteobacteria</taxon>
        <taxon>Vibrionales</taxon>
        <taxon>Vibrionaceae</taxon>
        <taxon>Vibrio</taxon>
    </lineage>
</organism>
<dbReference type="EC" id="2.1.1.199" evidence="1"/>
<dbReference type="EMBL" id="CP001233">
    <property type="protein sequence ID" value="ACP06632.1"/>
    <property type="molecule type" value="Genomic_DNA"/>
</dbReference>
<dbReference type="RefSeq" id="WP_000127221.1">
    <property type="nucleotide sequence ID" value="NC_012578.1"/>
</dbReference>
<dbReference type="SMR" id="C3LQV4"/>
<dbReference type="KEGG" id="vcm:VCM66_2332"/>
<dbReference type="HOGENOM" id="CLU_038422_2_0_6"/>
<dbReference type="Proteomes" id="UP000001217">
    <property type="component" value="Chromosome I"/>
</dbReference>
<dbReference type="GO" id="GO:0005737">
    <property type="term" value="C:cytoplasm"/>
    <property type="evidence" value="ECO:0007669"/>
    <property type="project" value="UniProtKB-SubCell"/>
</dbReference>
<dbReference type="GO" id="GO:0071424">
    <property type="term" value="F:rRNA (cytosine-N4-)-methyltransferase activity"/>
    <property type="evidence" value="ECO:0007669"/>
    <property type="project" value="UniProtKB-UniRule"/>
</dbReference>
<dbReference type="GO" id="GO:0070475">
    <property type="term" value="P:rRNA base methylation"/>
    <property type="evidence" value="ECO:0007669"/>
    <property type="project" value="UniProtKB-UniRule"/>
</dbReference>
<dbReference type="FunFam" id="1.10.150.170:FF:000001">
    <property type="entry name" value="Ribosomal RNA small subunit methyltransferase H"/>
    <property type="match status" value="1"/>
</dbReference>
<dbReference type="Gene3D" id="1.10.150.170">
    <property type="entry name" value="Putative methyltransferase TM0872, insert domain"/>
    <property type="match status" value="1"/>
</dbReference>
<dbReference type="Gene3D" id="3.40.50.150">
    <property type="entry name" value="Vaccinia Virus protein VP39"/>
    <property type="match status" value="1"/>
</dbReference>
<dbReference type="HAMAP" id="MF_01007">
    <property type="entry name" value="16SrRNA_methyltr_H"/>
    <property type="match status" value="1"/>
</dbReference>
<dbReference type="InterPro" id="IPR002903">
    <property type="entry name" value="RsmH"/>
</dbReference>
<dbReference type="InterPro" id="IPR023397">
    <property type="entry name" value="SAM-dep_MeTrfase_MraW_recog"/>
</dbReference>
<dbReference type="InterPro" id="IPR029063">
    <property type="entry name" value="SAM-dependent_MTases_sf"/>
</dbReference>
<dbReference type="NCBIfam" id="TIGR00006">
    <property type="entry name" value="16S rRNA (cytosine(1402)-N(4))-methyltransferase RsmH"/>
    <property type="match status" value="1"/>
</dbReference>
<dbReference type="PANTHER" id="PTHR11265:SF0">
    <property type="entry name" value="12S RRNA N4-METHYLCYTIDINE METHYLTRANSFERASE"/>
    <property type="match status" value="1"/>
</dbReference>
<dbReference type="PANTHER" id="PTHR11265">
    <property type="entry name" value="S-ADENOSYL-METHYLTRANSFERASE MRAW"/>
    <property type="match status" value="1"/>
</dbReference>
<dbReference type="Pfam" id="PF01795">
    <property type="entry name" value="Methyltransf_5"/>
    <property type="match status" value="1"/>
</dbReference>
<dbReference type="PIRSF" id="PIRSF004486">
    <property type="entry name" value="MraW"/>
    <property type="match status" value="1"/>
</dbReference>
<dbReference type="SUPFAM" id="SSF81799">
    <property type="entry name" value="Putative methyltransferase TM0872, insert domain"/>
    <property type="match status" value="1"/>
</dbReference>
<dbReference type="SUPFAM" id="SSF53335">
    <property type="entry name" value="S-adenosyl-L-methionine-dependent methyltransferases"/>
    <property type="match status" value="1"/>
</dbReference>
<protein>
    <recommendedName>
        <fullName evidence="1">Ribosomal RNA small subunit methyltransferase H</fullName>
        <ecNumber evidence="1">2.1.1.199</ecNumber>
    </recommendedName>
    <alternativeName>
        <fullName evidence="1">16S rRNA m(4)C1402 methyltransferase</fullName>
    </alternativeName>
    <alternativeName>
        <fullName evidence="1">rRNA (cytosine-N(4)-)-methyltransferase RsmH</fullName>
    </alternativeName>
</protein>
<gene>
    <name evidence="1" type="primary">rsmH</name>
    <name type="synonym">mraW</name>
    <name type="ordered locus">VCM66_2332</name>
</gene>
<feature type="chain" id="PRO_0000387208" description="Ribosomal RNA small subunit methyltransferase H">
    <location>
        <begin position="1"/>
        <end position="316"/>
    </location>
</feature>
<feature type="region of interest" description="Disordered" evidence="2">
    <location>
        <begin position="291"/>
        <end position="316"/>
    </location>
</feature>
<feature type="binding site" evidence="1">
    <location>
        <begin position="35"/>
        <end position="37"/>
    </location>
    <ligand>
        <name>S-adenosyl-L-methionine</name>
        <dbReference type="ChEBI" id="CHEBI:59789"/>
    </ligand>
</feature>
<feature type="binding site" evidence="1">
    <location>
        <position position="55"/>
    </location>
    <ligand>
        <name>S-adenosyl-L-methionine</name>
        <dbReference type="ChEBI" id="CHEBI:59789"/>
    </ligand>
</feature>
<feature type="binding site" evidence="1">
    <location>
        <position position="79"/>
    </location>
    <ligand>
        <name>S-adenosyl-L-methionine</name>
        <dbReference type="ChEBI" id="CHEBI:59789"/>
    </ligand>
</feature>
<feature type="binding site" evidence="1">
    <location>
        <position position="101"/>
    </location>
    <ligand>
        <name>S-adenosyl-L-methionine</name>
        <dbReference type="ChEBI" id="CHEBI:59789"/>
    </ligand>
</feature>
<feature type="binding site" evidence="1">
    <location>
        <position position="108"/>
    </location>
    <ligand>
        <name>S-adenosyl-L-methionine</name>
        <dbReference type="ChEBI" id="CHEBI:59789"/>
    </ligand>
</feature>
<proteinExistence type="inferred from homology"/>
<name>RSMH_VIBCM</name>
<reference key="1">
    <citation type="journal article" date="2008" name="PLoS ONE">
        <title>A recalibrated molecular clock and independent origins for the cholera pandemic clones.</title>
        <authorList>
            <person name="Feng L."/>
            <person name="Reeves P.R."/>
            <person name="Lan R."/>
            <person name="Ren Y."/>
            <person name="Gao C."/>
            <person name="Zhou Z."/>
            <person name="Ren Y."/>
            <person name="Cheng J."/>
            <person name="Wang W."/>
            <person name="Wang J."/>
            <person name="Qian W."/>
            <person name="Li D."/>
            <person name="Wang L."/>
        </authorList>
    </citation>
    <scope>NUCLEOTIDE SEQUENCE [LARGE SCALE GENOMIC DNA]</scope>
    <source>
        <strain>M66-2</strain>
    </source>
</reference>
<comment type="function">
    <text evidence="1">Specifically methylates the N4 position of cytidine in position 1402 (C1402) of 16S rRNA.</text>
</comment>
<comment type="catalytic activity">
    <reaction evidence="1">
        <text>cytidine(1402) in 16S rRNA + S-adenosyl-L-methionine = N(4)-methylcytidine(1402) in 16S rRNA + S-adenosyl-L-homocysteine + H(+)</text>
        <dbReference type="Rhea" id="RHEA:42928"/>
        <dbReference type="Rhea" id="RHEA-COMP:10286"/>
        <dbReference type="Rhea" id="RHEA-COMP:10287"/>
        <dbReference type="ChEBI" id="CHEBI:15378"/>
        <dbReference type="ChEBI" id="CHEBI:57856"/>
        <dbReference type="ChEBI" id="CHEBI:59789"/>
        <dbReference type="ChEBI" id="CHEBI:74506"/>
        <dbReference type="ChEBI" id="CHEBI:82748"/>
        <dbReference type="EC" id="2.1.1.199"/>
    </reaction>
</comment>
<comment type="subcellular location">
    <subcellularLocation>
        <location evidence="1">Cytoplasm</location>
    </subcellularLocation>
</comment>
<comment type="similarity">
    <text evidence="1">Belongs to the methyltransferase superfamily. RsmH family.</text>
</comment>
<evidence type="ECO:0000255" key="1">
    <source>
        <dbReference type="HAMAP-Rule" id="MF_01007"/>
    </source>
</evidence>
<evidence type="ECO:0000256" key="2">
    <source>
        <dbReference type="SAM" id="MobiDB-lite"/>
    </source>
</evidence>
<accession>C3LQV4</accession>
<keyword id="KW-0963">Cytoplasm</keyword>
<keyword id="KW-0489">Methyltransferase</keyword>
<keyword id="KW-0698">rRNA processing</keyword>
<keyword id="KW-0949">S-adenosyl-L-methionine</keyword>
<keyword id="KW-0808">Transferase</keyword>
<sequence>MTASFQHISVLLNESIEGLAIKPDGIYIDGTFGRGGHSRTILAQLGPEGRLYSIDRDPQAIAEAQKIDDPRFTIVHGPFSGIAEYAQRYDLVGKVDGVLFDLGVSSPQLDDAERGFSFMKDGPLDMRMDPTSGMPVSAWLAQADLDDITWVIREFGEDKHARRIAKAIVEYRENELNEPLTRTSQLAKLISDAAPKSFKEKKHPATRAFQAFRIYINSELEEIDTALRGASDILAPQGRLSVISFHSLEDRMVKRFMRKESQGPQVPHGIPLTQDQIRALGSAKMKTVGKALKPSDQEVELNPRSRSSVLRVAEKL</sequence>